<keyword id="KW-0963">Cytoplasm</keyword>
<keyword id="KW-0210">Decarboxylase</keyword>
<keyword id="KW-0456">Lyase</keyword>
<keyword id="KW-0627">Porphyrin biosynthesis</keyword>
<keyword id="KW-1185">Reference proteome</keyword>
<proteinExistence type="inferred from homology"/>
<evidence type="ECO:0000255" key="1">
    <source>
        <dbReference type="HAMAP-Rule" id="MF_00218"/>
    </source>
</evidence>
<protein>
    <recommendedName>
        <fullName evidence="1">Uroporphyrinogen decarboxylase</fullName>
        <shortName evidence="1">UPD</shortName>
        <shortName evidence="1">URO-D</shortName>
        <ecNumber evidence="1">4.1.1.37</ecNumber>
    </recommendedName>
</protein>
<name>DCUP_KORVE</name>
<reference key="1">
    <citation type="journal article" date="2009" name="Appl. Environ. Microbiol.">
        <title>Three genomes from the phylum Acidobacteria provide insight into the lifestyles of these microorganisms in soils.</title>
        <authorList>
            <person name="Ward N.L."/>
            <person name="Challacombe J.F."/>
            <person name="Janssen P.H."/>
            <person name="Henrissat B."/>
            <person name="Coutinho P.M."/>
            <person name="Wu M."/>
            <person name="Xie G."/>
            <person name="Haft D.H."/>
            <person name="Sait M."/>
            <person name="Badger J."/>
            <person name="Barabote R.D."/>
            <person name="Bradley B."/>
            <person name="Brettin T.S."/>
            <person name="Brinkac L.M."/>
            <person name="Bruce D."/>
            <person name="Creasy T."/>
            <person name="Daugherty S.C."/>
            <person name="Davidsen T.M."/>
            <person name="DeBoy R.T."/>
            <person name="Detter J.C."/>
            <person name="Dodson R.J."/>
            <person name="Durkin A.S."/>
            <person name="Ganapathy A."/>
            <person name="Gwinn-Giglio M."/>
            <person name="Han C.S."/>
            <person name="Khouri H."/>
            <person name="Kiss H."/>
            <person name="Kothari S.P."/>
            <person name="Madupu R."/>
            <person name="Nelson K.E."/>
            <person name="Nelson W.C."/>
            <person name="Paulsen I."/>
            <person name="Penn K."/>
            <person name="Ren Q."/>
            <person name="Rosovitz M.J."/>
            <person name="Selengut J.D."/>
            <person name="Shrivastava S."/>
            <person name="Sullivan S.A."/>
            <person name="Tapia R."/>
            <person name="Thompson L.S."/>
            <person name="Watkins K.L."/>
            <person name="Yang Q."/>
            <person name="Yu C."/>
            <person name="Zafar N."/>
            <person name="Zhou L."/>
            <person name="Kuske C.R."/>
        </authorList>
    </citation>
    <scope>NUCLEOTIDE SEQUENCE [LARGE SCALE GENOMIC DNA]</scope>
    <source>
        <strain>Ellin345</strain>
    </source>
</reference>
<gene>
    <name evidence="1" type="primary">hemE</name>
    <name type="ordered locus">Acid345_0693</name>
</gene>
<organism>
    <name type="scientific">Koribacter versatilis (strain Ellin345)</name>
    <dbReference type="NCBI Taxonomy" id="204669"/>
    <lineage>
        <taxon>Bacteria</taxon>
        <taxon>Pseudomonadati</taxon>
        <taxon>Acidobacteriota</taxon>
        <taxon>Terriglobia</taxon>
        <taxon>Terriglobales</taxon>
        <taxon>Candidatus Korobacteraceae</taxon>
        <taxon>Candidatus Korobacter</taxon>
    </lineage>
</organism>
<accession>Q1ITV2</accession>
<comment type="function">
    <text evidence="1">Catalyzes the decarboxylation of four acetate groups of uroporphyrinogen-III to yield coproporphyrinogen-III.</text>
</comment>
<comment type="catalytic activity">
    <reaction evidence="1">
        <text>uroporphyrinogen III + 4 H(+) = coproporphyrinogen III + 4 CO2</text>
        <dbReference type="Rhea" id="RHEA:19865"/>
        <dbReference type="ChEBI" id="CHEBI:15378"/>
        <dbReference type="ChEBI" id="CHEBI:16526"/>
        <dbReference type="ChEBI" id="CHEBI:57308"/>
        <dbReference type="ChEBI" id="CHEBI:57309"/>
        <dbReference type="EC" id="4.1.1.37"/>
    </reaction>
</comment>
<comment type="pathway">
    <text evidence="1">Porphyrin-containing compound metabolism; protoporphyrin-IX biosynthesis; coproporphyrinogen-III from 5-aminolevulinate: step 4/4.</text>
</comment>
<comment type="subunit">
    <text evidence="1">Homodimer.</text>
</comment>
<comment type="subcellular location">
    <subcellularLocation>
        <location evidence="1">Cytoplasm</location>
    </subcellularLocation>
</comment>
<comment type="similarity">
    <text evidence="1">Belongs to the uroporphyrinogen decarboxylase family.</text>
</comment>
<sequence length="351" mass="39087">MAAPNSLFVRACKRQPVERTPVWFMRQAGRYMSEYRAVREKYSLVEICKKPDVAAEVTITAAEALNVDAAIIFADLLLPLEVMGLPFHFSPGEGPVIEVPIRDAAHITRLRTDRAHDLGYVAEAVKKVSDHFGSKLPVIGFCGAPFTLASYMIEGGGSRNYLEVKKLMYNSPHAWDELLGKLVAVLSEYTADQVKAGADVIQIFDSWVGCLSVEDYRRYVLPRTTELVKALQHSTRVPIIYFGTDSATLLPSMRETGAEVIGLDWRVPLDQGWSLLEHSVAIQGNLDPVLLFAEWPELKSRAERILKQADGRPGHIFNLGHGILPHTPVQNVKDLAKFVHEYSSQLVGPRE</sequence>
<feature type="chain" id="PRO_0000325618" description="Uroporphyrinogen decarboxylase">
    <location>
        <begin position="1"/>
        <end position="351"/>
    </location>
</feature>
<feature type="binding site" evidence="1">
    <location>
        <begin position="26"/>
        <end position="30"/>
    </location>
    <ligand>
        <name>substrate</name>
    </ligand>
</feature>
<feature type="binding site" evidence="1">
    <location>
        <position position="75"/>
    </location>
    <ligand>
        <name>substrate</name>
    </ligand>
</feature>
<feature type="binding site" evidence="1">
    <location>
        <position position="151"/>
    </location>
    <ligand>
        <name>substrate</name>
    </ligand>
</feature>
<feature type="binding site" evidence="1">
    <location>
        <position position="206"/>
    </location>
    <ligand>
        <name>substrate</name>
    </ligand>
</feature>
<feature type="binding site" evidence="1">
    <location>
        <position position="321"/>
    </location>
    <ligand>
        <name>substrate</name>
    </ligand>
</feature>
<feature type="site" description="Transition state stabilizer" evidence="1">
    <location>
        <position position="75"/>
    </location>
</feature>
<dbReference type="EC" id="4.1.1.37" evidence="1"/>
<dbReference type="EMBL" id="CP000360">
    <property type="protein sequence ID" value="ABF39698.1"/>
    <property type="molecule type" value="Genomic_DNA"/>
</dbReference>
<dbReference type="RefSeq" id="WP_011521500.1">
    <property type="nucleotide sequence ID" value="NC_008009.1"/>
</dbReference>
<dbReference type="SMR" id="Q1ITV2"/>
<dbReference type="STRING" id="204669.Acid345_0693"/>
<dbReference type="EnsemblBacteria" id="ABF39698">
    <property type="protein sequence ID" value="ABF39698"/>
    <property type="gene ID" value="Acid345_0693"/>
</dbReference>
<dbReference type="KEGG" id="aba:Acid345_0693"/>
<dbReference type="eggNOG" id="COG0407">
    <property type="taxonomic scope" value="Bacteria"/>
</dbReference>
<dbReference type="HOGENOM" id="CLU_040933_0_1_0"/>
<dbReference type="OrthoDB" id="9806656at2"/>
<dbReference type="UniPathway" id="UPA00251">
    <property type="reaction ID" value="UER00321"/>
</dbReference>
<dbReference type="Proteomes" id="UP000002432">
    <property type="component" value="Chromosome"/>
</dbReference>
<dbReference type="GO" id="GO:0005829">
    <property type="term" value="C:cytosol"/>
    <property type="evidence" value="ECO:0007669"/>
    <property type="project" value="TreeGrafter"/>
</dbReference>
<dbReference type="GO" id="GO:0004853">
    <property type="term" value="F:uroporphyrinogen decarboxylase activity"/>
    <property type="evidence" value="ECO:0007669"/>
    <property type="project" value="UniProtKB-UniRule"/>
</dbReference>
<dbReference type="GO" id="GO:0006782">
    <property type="term" value="P:protoporphyrinogen IX biosynthetic process"/>
    <property type="evidence" value="ECO:0007669"/>
    <property type="project" value="UniProtKB-UniRule"/>
</dbReference>
<dbReference type="CDD" id="cd00717">
    <property type="entry name" value="URO-D"/>
    <property type="match status" value="1"/>
</dbReference>
<dbReference type="Gene3D" id="3.20.20.210">
    <property type="match status" value="1"/>
</dbReference>
<dbReference type="HAMAP" id="MF_00218">
    <property type="entry name" value="URO_D"/>
    <property type="match status" value="1"/>
</dbReference>
<dbReference type="InterPro" id="IPR038071">
    <property type="entry name" value="UROD/MetE-like_sf"/>
</dbReference>
<dbReference type="InterPro" id="IPR006361">
    <property type="entry name" value="Uroporphyrinogen_deCO2ase_HemE"/>
</dbReference>
<dbReference type="InterPro" id="IPR000257">
    <property type="entry name" value="Uroporphyrinogen_deCOase"/>
</dbReference>
<dbReference type="NCBIfam" id="TIGR01464">
    <property type="entry name" value="hemE"/>
    <property type="match status" value="1"/>
</dbReference>
<dbReference type="PANTHER" id="PTHR21091">
    <property type="entry name" value="METHYLTETRAHYDROFOLATE:HOMOCYSTEINE METHYLTRANSFERASE RELATED"/>
    <property type="match status" value="1"/>
</dbReference>
<dbReference type="PANTHER" id="PTHR21091:SF169">
    <property type="entry name" value="UROPORPHYRINOGEN DECARBOXYLASE"/>
    <property type="match status" value="1"/>
</dbReference>
<dbReference type="Pfam" id="PF01208">
    <property type="entry name" value="URO-D"/>
    <property type="match status" value="1"/>
</dbReference>
<dbReference type="SUPFAM" id="SSF51726">
    <property type="entry name" value="UROD/MetE-like"/>
    <property type="match status" value="1"/>
</dbReference>
<dbReference type="PROSITE" id="PS00906">
    <property type="entry name" value="UROD_1"/>
    <property type="match status" value="1"/>
</dbReference>
<dbReference type="PROSITE" id="PS00907">
    <property type="entry name" value="UROD_2"/>
    <property type="match status" value="1"/>
</dbReference>